<accession>Q9N2E9</accession>
<accession>Q8HZH1</accession>
<organism>
    <name type="scientific">Pongo pygmaeus</name>
    <name type="common">Bornean orangutan</name>
    <dbReference type="NCBI Taxonomy" id="9600"/>
    <lineage>
        <taxon>Eukaryota</taxon>
        <taxon>Metazoa</taxon>
        <taxon>Chordata</taxon>
        <taxon>Craniata</taxon>
        <taxon>Vertebrata</taxon>
        <taxon>Euteleostomi</taxon>
        <taxon>Mammalia</taxon>
        <taxon>Eutheria</taxon>
        <taxon>Euarchontoglires</taxon>
        <taxon>Primates</taxon>
        <taxon>Haplorrhini</taxon>
        <taxon>Catarrhini</taxon>
        <taxon>Hominidae</taxon>
        <taxon>Pongo</taxon>
    </lineage>
</organism>
<keyword id="KW-0165">Cleavage on pair of basic residues</keyword>
<keyword id="KW-1015">Disulfide bond</keyword>
<keyword id="KW-0967">Endosome</keyword>
<keyword id="KW-0325">Glycoprotein</keyword>
<keyword id="KW-0339">Growth factor</keyword>
<keyword id="KW-0481">Metalloenzyme inhibitor</keyword>
<keyword id="KW-0483">Metalloprotease inhibitor</keyword>
<keyword id="KW-0646">Protease inhibitor</keyword>
<keyword id="KW-0964">Secreted</keyword>
<keyword id="KW-0732">Signal</keyword>
<name>NGF_PONPY</name>
<sequence>MSMLFYTLITAFLIGIQAEPHSESNVPAGHTIPQAHWTKLQHSLDTALRRARSTPAAAIAARVAGQTCNITVDPRLFKKRRLRSPRVLFSTQPPPEAADTQDLDFEVGGAAPFNRTHRSKRSSSHPIFHRGEFSVCDSVSVWVGDKTTATDIKGKEVMVLGEVNINNSVFKQYFFETKCRDPNPVDSGCRGIDSKHWNSYCTTTHTFVKALTMDGKQAAWRFIRIDTACVCVLSRKAVRRA</sequence>
<comment type="function">
    <text evidence="2">Nerve growth factor is important for the development and maintenance of the sympathetic and sensory nervous systems. Extracellular ligand for the NTRK1 and NGFR receptors, activates cellular signaling cascades through those receptor tyrosine kinase to regulate neuronal proliferation, differentiation and survival. Inhibits metalloproteinase dependent proteolysis of platelet glycoprotein VI.</text>
</comment>
<comment type="subunit">
    <text evidence="2 3">Homodimer. The homodimer interacts with a single NTRK1 chain. The homodimer interacts with a single NGFR chain (By similarity). The NGF dimer interacts with a single SORCS2 chain (via extracellular domain). The NGF precursor (proNGF) binds to a receptor complex formed by SORT1 and NGFR, which leads to NGF endocytosis. Both mature NGF and the immature NGF precursor (proNGF) interact with SORCS2 and with the heterodimer formed by SORCS2 and NGFR (via extracellular domains). The NGF precursor (proNGF) has much higher affinity for SORCS2 than mature NGF. The NGF precursor (proNGF) has much higher affinity for SORT1 than mature NGF (By similarity). Interacts with ADAM10 in a divalent cation-dependent manner (By similarity). Interacts with SORCS3 (By similarity).</text>
</comment>
<comment type="subcellular location">
    <subcellularLocation>
        <location evidence="2">Secreted</location>
    </subcellularLocation>
    <subcellularLocation>
        <location evidence="3">Endosome lumen</location>
    </subcellularLocation>
    <text evidence="3">ProNGF is endocytosed after binding to the cell surface receptor formed by SORT1 and NGFR.</text>
</comment>
<comment type="similarity">
    <text evidence="5">Belongs to the NGF-beta family.</text>
</comment>
<gene>
    <name type="primary">NGF</name>
    <name type="synonym">NGFB</name>
</gene>
<reference key="1">
    <citation type="journal article" date="2004" name="Mol. Biol. Evol.">
        <title>Human-specific amino acid changes found in 103 protein-coding genes.</title>
        <authorList>
            <person name="Kitano T."/>
            <person name="Liu Y.-H."/>
            <person name="Ueda S."/>
            <person name="Saitou N."/>
        </authorList>
    </citation>
    <scope>NUCLEOTIDE SEQUENCE [GENOMIC DNA]</scope>
    <source>
        <strain>Isolate Oran-U1</strain>
    </source>
</reference>
<reference key="2">
    <citation type="submission" date="2002-03" db="EMBL/GenBank/DDBJ databases">
        <title>Molecular evolution in higher primates; gene specific and organism specific characteristics.</title>
        <authorList>
            <person name="O'Huigin C."/>
            <person name="Tichy H."/>
            <person name="Klein J."/>
        </authorList>
    </citation>
    <scope>NUCLEOTIDE SEQUENCE [GENOMIC DNA] OF 15-224</scope>
</reference>
<evidence type="ECO:0000250" key="1"/>
<evidence type="ECO:0000250" key="2">
    <source>
        <dbReference type="UniProtKB" id="P01138"/>
    </source>
</evidence>
<evidence type="ECO:0000250" key="3">
    <source>
        <dbReference type="UniProtKB" id="P01139"/>
    </source>
</evidence>
<evidence type="ECO:0000255" key="4"/>
<evidence type="ECO:0000305" key="5"/>
<protein>
    <recommendedName>
        <fullName>Beta-nerve growth factor</fullName>
        <shortName>Beta-NGF</shortName>
    </recommendedName>
</protein>
<dbReference type="EMBL" id="AB037520">
    <property type="protein sequence ID" value="BAA90440.1"/>
    <property type="molecule type" value="Genomic_DNA"/>
</dbReference>
<dbReference type="EMBL" id="AY091927">
    <property type="protein sequence ID" value="AAM76545.1"/>
    <property type="molecule type" value="Genomic_DNA"/>
</dbReference>
<dbReference type="SMR" id="Q9N2E9"/>
<dbReference type="GlyCosmos" id="Q9N2E9">
    <property type="glycosylation" value="3 sites, No reported glycans"/>
</dbReference>
<dbReference type="GO" id="GO:0030424">
    <property type="term" value="C:axon"/>
    <property type="evidence" value="ECO:0007669"/>
    <property type="project" value="TreeGrafter"/>
</dbReference>
<dbReference type="GO" id="GO:0030425">
    <property type="term" value="C:dendrite"/>
    <property type="evidence" value="ECO:0007669"/>
    <property type="project" value="TreeGrafter"/>
</dbReference>
<dbReference type="GO" id="GO:0005615">
    <property type="term" value="C:extracellular space"/>
    <property type="evidence" value="ECO:0007669"/>
    <property type="project" value="TreeGrafter"/>
</dbReference>
<dbReference type="GO" id="GO:0008021">
    <property type="term" value="C:synaptic vesicle"/>
    <property type="evidence" value="ECO:0007669"/>
    <property type="project" value="TreeGrafter"/>
</dbReference>
<dbReference type="GO" id="GO:0008083">
    <property type="term" value="F:growth factor activity"/>
    <property type="evidence" value="ECO:0007669"/>
    <property type="project" value="UniProtKB-KW"/>
</dbReference>
<dbReference type="GO" id="GO:0008191">
    <property type="term" value="F:metalloendopeptidase inhibitor activity"/>
    <property type="evidence" value="ECO:0000250"/>
    <property type="project" value="UniProtKB"/>
</dbReference>
<dbReference type="GO" id="GO:0005163">
    <property type="term" value="F:nerve growth factor receptor binding"/>
    <property type="evidence" value="ECO:0007669"/>
    <property type="project" value="TreeGrafter"/>
</dbReference>
<dbReference type="GO" id="GO:0007169">
    <property type="term" value="P:cell surface receptor protein tyrosine kinase signaling pathway"/>
    <property type="evidence" value="ECO:0007669"/>
    <property type="project" value="TreeGrafter"/>
</dbReference>
<dbReference type="GO" id="GO:0050804">
    <property type="term" value="P:modulation of chemical synaptic transmission"/>
    <property type="evidence" value="ECO:0007669"/>
    <property type="project" value="TreeGrafter"/>
</dbReference>
<dbReference type="GO" id="GO:0043524">
    <property type="term" value="P:negative regulation of neuron apoptotic process"/>
    <property type="evidence" value="ECO:0007669"/>
    <property type="project" value="TreeGrafter"/>
</dbReference>
<dbReference type="GO" id="GO:0021675">
    <property type="term" value="P:nerve development"/>
    <property type="evidence" value="ECO:0007669"/>
    <property type="project" value="TreeGrafter"/>
</dbReference>
<dbReference type="GO" id="GO:0038180">
    <property type="term" value="P:nerve growth factor signaling pathway"/>
    <property type="evidence" value="ECO:0007669"/>
    <property type="project" value="TreeGrafter"/>
</dbReference>
<dbReference type="GO" id="GO:0048812">
    <property type="term" value="P:neuron projection morphogenesis"/>
    <property type="evidence" value="ECO:0007669"/>
    <property type="project" value="TreeGrafter"/>
</dbReference>
<dbReference type="FunFam" id="2.10.90.10:FF:000002">
    <property type="entry name" value="Brain-derived neurotrophic factor"/>
    <property type="match status" value="1"/>
</dbReference>
<dbReference type="Gene3D" id="2.10.90.10">
    <property type="entry name" value="Cystine-knot cytokines"/>
    <property type="match status" value="1"/>
</dbReference>
<dbReference type="InterPro" id="IPR029034">
    <property type="entry name" value="Cystine-knot_cytokine"/>
</dbReference>
<dbReference type="InterPro" id="IPR020408">
    <property type="entry name" value="Nerve_growth_factor-like"/>
</dbReference>
<dbReference type="InterPro" id="IPR002072">
    <property type="entry name" value="Nerve_growth_factor-rel"/>
</dbReference>
<dbReference type="InterPro" id="IPR020425">
    <property type="entry name" value="Nerve_growth_factor_bsu"/>
</dbReference>
<dbReference type="InterPro" id="IPR020437">
    <property type="entry name" value="Nerve_growth_factor_bsu_mml"/>
</dbReference>
<dbReference type="InterPro" id="IPR019846">
    <property type="entry name" value="Nerve_growth_factor_CS"/>
</dbReference>
<dbReference type="PANTHER" id="PTHR11589:SF10">
    <property type="entry name" value="BETA-NERVE GROWTH FACTOR"/>
    <property type="match status" value="1"/>
</dbReference>
<dbReference type="PANTHER" id="PTHR11589">
    <property type="entry name" value="NERVE GROWTH FACTOR NGF -RELATED"/>
    <property type="match status" value="1"/>
</dbReference>
<dbReference type="Pfam" id="PF00243">
    <property type="entry name" value="NGF"/>
    <property type="match status" value="1"/>
</dbReference>
<dbReference type="PIRSF" id="PIRSF001789">
    <property type="entry name" value="NGF"/>
    <property type="match status" value="1"/>
</dbReference>
<dbReference type="PRINTS" id="PR01925">
    <property type="entry name" value="MAMLNGFBETA"/>
</dbReference>
<dbReference type="PRINTS" id="PR00268">
    <property type="entry name" value="NGF"/>
</dbReference>
<dbReference type="PRINTS" id="PR01913">
    <property type="entry name" value="NGFBETA"/>
</dbReference>
<dbReference type="SMART" id="SM00140">
    <property type="entry name" value="NGF"/>
    <property type="match status" value="1"/>
</dbReference>
<dbReference type="SUPFAM" id="SSF57501">
    <property type="entry name" value="Cystine-knot cytokines"/>
    <property type="match status" value="1"/>
</dbReference>
<dbReference type="PROSITE" id="PS00248">
    <property type="entry name" value="NGF_1"/>
    <property type="match status" value="1"/>
</dbReference>
<dbReference type="PROSITE" id="PS50270">
    <property type="entry name" value="NGF_2"/>
    <property type="match status" value="1"/>
</dbReference>
<proteinExistence type="inferred from homology"/>
<feature type="signal peptide" evidence="4">
    <location>
        <begin position="1"/>
        <end position="18"/>
    </location>
</feature>
<feature type="propeptide" id="PRO_0000277874" evidence="1">
    <location>
        <begin position="19"/>
        <end position="121"/>
    </location>
</feature>
<feature type="chain" id="PRO_0000277875" description="Beta-nerve growth factor">
    <location>
        <begin position="122"/>
        <end position="241"/>
    </location>
</feature>
<feature type="glycosylation site" description="N-linked (GlcNAc...) asparagine" evidence="4">
    <location>
        <position position="69"/>
    </location>
</feature>
<feature type="glycosylation site" description="N-linked (GlcNAc...) asparagine" evidence="4">
    <location>
        <position position="114"/>
    </location>
</feature>
<feature type="glycosylation site" description="N-linked (GlcNAc...) asparagine" evidence="4">
    <location>
        <position position="166"/>
    </location>
</feature>
<feature type="disulfide bond" evidence="2">
    <location>
        <begin position="136"/>
        <end position="201"/>
    </location>
</feature>
<feature type="disulfide bond" evidence="2">
    <location>
        <begin position="179"/>
        <end position="229"/>
    </location>
</feature>
<feature type="disulfide bond" evidence="2">
    <location>
        <begin position="189"/>
        <end position="231"/>
    </location>
</feature>